<sequence length="357" mass="39361">MAELQEVQITEEKPLLPGQTPEAAKTHSVETPYGSVTFTVYGTPKPKRPAILTYHDVGLNYKSCFQPLFQFEDMQEIIQNFVRVHVDAPGMEEGAPVFPLGYQYPSLDQLADMIPCVLQYLNFSTIIGVGVGAGAYILARYALNHPDTVEGLVLINIDPNAKRWMDWAAHKLTGLTSSIPEMILGHLFSQEELSGNSELIQKYRNIITHAPNLDNIELYWNSYNNRRDLNFERGGDITLKCPVMLVVGDQAPHEDAVVECNSKLDPTQTSFLKMADSGGQPQLTQPGKLTEAFKYFLQGMGYMASSCMTRLSRSRTASLTSAASVDGNRSRSRTLSQSSESGTLSSGPPGHTMEVSC</sequence>
<evidence type="ECO:0000250" key="1"/>
<evidence type="ECO:0000250" key="2">
    <source>
        <dbReference type="UniProtKB" id="Q9QYG0"/>
    </source>
</evidence>
<evidence type="ECO:0000250" key="3">
    <source>
        <dbReference type="UniProtKB" id="Q9UN36"/>
    </source>
</evidence>
<evidence type="ECO:0000256" key="4">
    <source>
        <dbReference type="SAM" id="MobiDB-lite"/>
    </source>
</evidence>
<evidence type="ECO:0000305" key="5"/>
<proteinExistence type="evidence at transcript level"/>
<comment type="function">
    <text evidence="1">Contributes to the regulation of the Wnt signaling pathway. Down-regulates CTNNB1-mediated transcriptional activation of target genes, such as CCND1, and may thereby act as tumor suppressor. May be involved in dendritic cell and neuron differentiation (By similarity).</text>
</comment>
<comment type="subunit">
    <text evidence="1">Interacts with CTNNB1.</text>
</comment>
<comment type="subcellular location">
    <subcellularLocation>
        <location evidence="1">Cytoplasm</location>
    </subcellularLocation>
    <subcellularLocation>
        <location evidence="1">Cytoplasm</location>
        <location evidence="1">Perinuclear region</location>
    </subcellularLocation>
    <subcellularLocation>
        <location evidence="1">Cell projection</location>
        <location evidence="1">Growth cone</location>
    </subcellularLocation>
    <text evidence="1">In neurons, seems to concentrate at axonal growth cone. Perinuclear in neurons (By similarity).</text>
</comment>
<comment type="similarity">
    <text evidence="5">Belongs to the NDRG family.</text>
</comment>
<feature type="initiator methionine" description="Removed" evidence="3">
    <location>
        <position position="1"/>
    </location>
</feature>
<feature type="chain" id="PRO_0000441169" description="Protein NDRG2">
    <location>
        <begin position="2"/>
        <end position="357"/>
    </location>
</feature>
<feature type="region of interest" description="Disordered" evidence="4">
    <location>
        <begin position="1"/>
        <end position="28"/>
    </location>
</feature>
<feature type="region of interest" description="Disordered" evidence="4">
    <location>
        <begin position="320"/>
        <end position="357"/>
    </location>
</feature>
<feature type="compositionally biased region" description="Low complexity" evidence="4">
    <location>
        <begin position="333"/>
        <end position="347"/>
    </location>
</feature>
<feature type="modified residue" description="N-acetylalanine" evidence="3">
    <location>
        <position position="2"/>
    </location>
</feature>
<feature type="modified residue" description="Phosphothreonine" evidence="3">
    <location>
        <position position="20"/>
    </location>
</feature>
<feature type="modified residue" description="Phosphoserine" evidence="3">
    <location>
        <position position="312"/>
    </location>
</feature>
<feature type="modified residue" description="Phosphoserine" evidence="3">
    <location>
        <position position="314"/>
    </location>
</feature>
<feature type="modified residue" description="Phosphothreonine" evidence="2">
    <location>
        <position position="316"/>
    </location>
</feature>
<feature type="modified residue" description="Phosphoserine" evidence="2">
    <location>
        <position position="318"/>
    </location>
</feature>
<feature type="modified residue" description="Phosphothreonine" evidence="3">
    <location>
        <position position="320"/>
    </location>
</feature>
<feature type="modified residue" description="Phosphoserine" evidence="2">
    <location>
        <position position="321"/>
    </location>
</feature>
<feature type="modified residue" description="Phosphoserine" evidence="3">
    <location>
        <position position="324"/>
    </location>
</feature>
<feature type="modified residue" description="Phosphoserine" evidence="3">
    <location>
        <position position="330"/>
    </location>
</feature>
<feature type="modified residue" description="Phosphothreonine" evidence="2">
    <location>
        <position position="334"/>
    </location>
</feature>
<feature type="modified residue" description="Phosphoserine" evidence="2">
    <location>
        <position position="336"/>
    </location>
</feature>
<feature type="modified residue" description="Phosphoserine" evidence="2">
    <location>
        <position position="338"/>
    </location>
</feature>
<feature type="modified residue" description="Phosphoserine" evidence="2">
    <location>
        <position position="339"/>
    </location>
</feature>
<feature type="modified residue" description="Phosphoserine" evidence="2">
    <location>
        <position position="341"/>
    </location>
</feature>
<feature type="modified residue" description="Phosphothreonine" evidence="2">
    <location>
        <position position="343"/>
    </location>
</feature>
<feature type="modified residue" description="Phosphoserine" evidence="2">
    <location>
        <position position="356"/>
    </location>
</feature>
<accession>A5A6K6</accession>
<organism>
    <name type="scientific">Pan troglodytes</name>
    <name type="common">Chimpanzee</name>
    <dbReference type="NCBI Taxonomy" id="9598"/>
    <lineage>
        <taxon>Eukaryota</taxon>
        <taxon>Metazoa</taxon>
        <taxon>Chordata</taxon>
        <taxon>Craniata</taxon>
        <taxon>Vertebrata</taxon>
        <taxon>Euteleostomi</taxon>
        <taxon>Mammalia</taxon>
        <taxon>Eutheria</taxon>
        <taxon>Euarchontoglires</taxon>
        <taxon>Primates</taxon>
        <taxon>Haplorrhini</taxon>
        <taxon>Catarrhini</taxon>
        <taxon>Hominidae</taxon>
        <taxon>Pan</taxon>
    </lineage>
</organism>
<dbReference type="EMBL" id="AB222134">
    <property type="protein sequence ID" value="BAF62379.1"/>
    <property type="molecule type" value="mRNA"/>
</dbReference>
<dbReference type="RefSeq" id="NP_001182082.1">
    <property type="nucleotide sequence ID" value="NM_001195153.2"/>
</dbReference>
<dbReference type="SMR" id="A5A6K6"/>
<dbReference type="FunCoup" id="A5A6K6">
    <property type="interactions" value="1023"/>
</dbReference>
<dbReference type="STRING" id="9598.ENSPTRP00000076782"/>
<dbReference type="ESTHER" id="pantr-ndrg2">
    <property type="family name" value="Ndr_family"/>
</dbReference>
<dbReference type="MEROPS" id="S33.989"/>
<dbReference type="PaxDb" id="9598-ENSPTRP00000010368"/>
<dbReference type="GeneID" id="100499579"/>
<dbReference type="CTD" id="57447"/>
<dbReference type="eggNOG" id="KOG2931">
    <property type="taxonomic scope" value="Eukaryota"/>
</dbReference>
<dbReference type="InParanoid" id="A5A6K6"/>
<dbReference type="Proteomes" id="UP000002277">
    <property type="component" value="Unplaced"/>
</dbReference>
<dbReference type="GO" id="GO:0005737">
    <property type="term" value="C:cytoplasm"/>
    <property type="evidence" value="ECO:0000318"/>
    <property type="project" value="GO_Central"/>
</dbReference>
<dbReference type="GO" id="GO:0030426">
    <property type="term" value="C:growth cone"/>
    <property type="evidence" value="ECO:0007669"/>
    <property type="project" value="UniProtKB-SubCell"/>
</dbReference>
<dbReference type="GO" id="GO:0048471">
    <property type="term" value="C:perinuclear region of cytoplasm"/>
    <property type="evidence" value="ECO:0007669"/>
    <property type="project" value="UniProtKB-SubCell"/>
</dbReference>
<dbReference type="GO" id="GO:0030154">
    <property type="term" value="P:cell differentiation"/>
    <property type="evidence" value="ECO:0007669"/>
    <property type="project" value="UniProtKB-KW"/>
</dbReference>
<dbReference type="GO" id="GO:0007399">
    <property type="term" value="P:nervous system development"/>
    <property type="evidence" value="ECO:0007669"/>
    <property type="project" value="UniProtKB-KW"/>
</dbReference>
<dbReference type="GO" id="GO:0007165">
    <property type="term" value="P:signal transduction"/>
    <property type="evidence" value="ECO:0000318"/>
    <property type="project" value="GO_Central"/>
</dbReference>
<dbReference type="GO" id="GO:0016055">
    <property type="term" value="P:Wnt signaling pathway"/>
    <property type="evidence" value="ECO:0007669"/>
    <property type="project" value="UniProtKB-KW"/>
</dbReference>
<dbReference type="FunFam" id="3.40.50.1820:FF:000034">
    <property type="entry name" value="NDRG2 isoform 1"/>
    <property type="match status" value="1"/>
</dbReference>
<dbReference type="Gene3D" id="3.40.50.1820">
    <property type="entry name" value="alpha/beta hydrolase"/>
    <property type="match status" value="1"/>
</dbReference>
<dbReference type="InterPro" id="IPR029058">
    <property type="entry name" value="AB_hydrolase_fold"/>
</dbReference>
<dbReference type="InterPro" id="IPR004142">
    <property type="entry name" value="NDRG"/>
</dbReference>
<dbReference type="PANTHER" id="PTHR11034">
    <property type="entry name" value="N-MYC DOWNSTREAM REGULATED"/>
    <property type="match status" value="1"/>
</dbReference>
<dbReference type="Pfam" id="PF03096">
    <property type="entry name" value="Ndr"/>
    <property type="match status" value="1"/>
</dbReference>
<dbReference type="SUPFAM" id="SSF53474">
    <property type="entry name" value="alpha/beta-Hydrolases"/>
    <property type="match status" value="1"/>
</dbReference>
<gene>
    <name type="primary">NDRG2</name>
</gene>
<protein>
    <recommendedName>
        <fullName>Protein NDRG2</fullName>
    </recommendedName>
    <alternativeName>
        <fullName>N-myc downstream-regulated gene 2 protein</fullName>
    </alternativeName>
</protein>
<reference key="1">
    <citation type="journal article" date="2007" name="Gene">
        <title>Mapping of chimpanzee full-length cDNAs onto the human genome unveils large potential divergence of the transcriptome.</title>
        <authorList>
            <person name="Sakate R."/>
            <person name="Suto Y."/>
            <person name="Imanishi T."/>
            <person name="Tanoue T."/>
            <person name="Hida M."/>
            <person name="Hayasaka I."/>
            <person name="Kusuda J."/>
            <person name="Gojobori T."/>
            <person name="Hashimoto K."/>
            <person name="Hirai M."/>
        </authorList>
    </citation>
    <scope>NUCLEOTIDE SEQUENCE [MRNA]</scope>
    <source>
        <tissue>Brain</tissue>
    </source>
</reference>
<keyword id="KW-0007">Acetylation</keyword>
<keyword id="KW-0966">Cell projection</keyword>
<keyword id="KW-0963">Cytoplasm</keyword>
<keyword id="KW-0217">Developmental protein</keyword>
<keyword id="KW-0221">Differentiation</keyword>
<keyword id="KW-0524">Neurogenesis</keyword>
<keyword id="KW-0597">Phosphoprotein</keyword>
<keyword id="KW-1185">Reference proteome</keyword>
<keyword id="KW-0043">Tumor suppressor</keyword>
<keyword id="KW-0879">Wnt signaling pathway</keyword>
<name>NDRG2_PANTR</name>